<feature type="chain" id="PRO_0000089679" description="Putative uncharacterized protein encoded by LINC00474">
    <location>
        <begin position="1"/>
        <end position="69"/>
    </location>
</feature>
<organism>
    <name type="scientific">Homo sapiens</name>
    <name type="common">Human</name>
    <dbReference type="NCBI Taxonomy" id="9606"/>
    <lineage>
        <taxon>Eukaryota</taxon>
        <taxon>Metazoa</taxon>
        <taxon>Chordata</taxon>
        <taxon>Craniata</taxon>
        <taxon>Vertebrata</taxon>
        <taxon>Euteleostomi</taxon>
        <taxon>Mammalia</taxon>
        <taxon>Eutheria</taxon>
        <taxon>Euarchontoglires</taxon>
        <taxon>Primates</taxon>
        <taxon>Haplorrhini</taxon>
        <taxon>Catarrhini</taxon>
        <taxon>Hominidae</taxon>
        <taxon>Homo</taxon>
    </lineage>
</organism>
<accession>Q9P2X8</accession>
<accession>Q08EI2</accession>
<dbReference type="EMBL" id="AB021923">
    <property type="protein sequence ID" value="BAA96243.1"/>
    <property type="status" value="ALT_FRAME"/>
    <property type="molecule type" value="mRNA"/>
</dbReference>
<dbReference type="EMBL" id="CH471090">
    <property type="protein sequence ID" value="EAW87438.1"/>
    <property type="molecule type" value="Genomic_DNA"/>
</dbReference>
<dbReference type="EMBL" id="BC104240">
    <property type="status" value="NOT_ANNOTATED_CDS"/>
    <property type="molecule type" value="mRNA"/>
</dbReference>
<dbReference type="EMBL" id="BC104241">
    <property type="status" value="NOT_ANNOTATED_CDS"/>
    <property type="molecule type" value="mRNA"/>
</dbReference>
<dbReference type="EMBL" id="BC112996">
    <property type="status" value="NOT_ANNOTATED_CDS"/>
    <property type="molecule type" value="mRNA"/>
</dbReference>
<dbReference type="EMBL" id="BC112997">
    <property type="status" value="NOT_ANNOTATED_CDS"/>
    <property type="molecule type" value="mRNA"/>
</dbReference>
<dbReference type="EMBL" id="BC128039">
    <property type="status" value="NOT_ANNOTATED_CDS"/>
    <property type="molecule type" value="mRNA"/>
</dbReference>
<dbReference type="SMR" id="Q9P2X8"/>
<dbReference type="BioMuta" id="HGNC:23367"/>
<dbReference type="AGR" id="HGNC:23367"/>
<dbReference type="GeneCards" id="LINC00474"/>
<dbReference type="HGNC" id="HGNC:23367">
    <property type="gene designation" value="LINC00474"/>
</dbReference>
<dbReference type="neXtProt" id="NX_Q9P2X8"/>
<dbReference type="InParanoid" id="Q9P2X8"/>
<dbReference type="PAN-GO" id="Q9P2X8">
    <property type="GO annotations" value="0 GO annotations based on evolutionary models"/>
</dbReference>
<dbReference type="PathwayCommons" id="Q9P2X8"/>
<dbReference type="Pharos" id="Q9P2X8">
    <property type="development level" value="Tdark"/>
</dbReference>
<dbReference type="Proteomes" id="UP000005640">
    <property type="component" value="Unplaced"/>
</dbReference>
<dbReference type="RNAct" id="Q9P2X8">
    <property type="molecule type" value="protein"/>
</dbReference>
<evidence type="ECO:0000305" key="1"/>
<reference key="1">
    <citation type="journal article" date="1999" name="DNA Res.">
        <title>Significant differences in the frequency of transcriptional units, types and numbers of repetitive elements, GC content, and the number of CpG islands between a 1,010-kb G-band genomic segment on chromosome 9q31.3 and a 1,200-kb R-band genomic segment on chromosome 3p21.3.</title>
        <authorList>
            <person name="Daigo Y."/>
            <person name="Isomura M."/>
            <person name="Nishiwaki T."/>
            <person name="Suzuki K."/>
            <person name="Maruyama O."/>
            <person name="Takeuchi K."/>
            <person name="Yamane Y."/>
            <person name="Hayashi R."/>
            <person name="Minami M."/>
            <person name="Hojo Y."/>
            <person name="Uchiyama I."/>
            <person name="Takagi T."/>
            <person name="Nakamura Y."/>
        </authorList>
    </citation>
    <scope>NUCLEOTIDE SEQUENCE [MRNA]</scope>
    <source>
        <tissue>Placenta</tissue>
    </source>
</reference>
<reference key="2">
    <citation type="submission" date="2005-07" db="EMBL/GenBank/DDBJ databases">
        <authorList>
            <person name="Mural R.J."/>
            <person name="Istrail S."/>
            <person name="Sutton G.G."/>
            <person name="Florea L."/>
            <person name="Halpern A.L."/>
            <person name="Mobarry C.M."/>
            <person name="Lippert R."/>
            <person name="Walenz B."/>
            <person name="Shatkay H."/>
            <person name="Dew I."/>
            <person name="Miller J.R."/>
            <person name="Flanigan M.J."/>
            <person name="Edwards N.J."/>
            <person name="Bolanos R."/>
            <person name="Fasulo D."/>
            <person name="Halldorsson B.V."/>
            <person name="Hannenhalli S."/>
            <person name="Turner R."/>
            <person name="Yooseph S."/>
            <person name="Lu F."/>
            <person name="Nusskern D.R."/>
            <person name="Shue B.C."/>
            <person name="Zheng X.H."/>
            <person name="Zhong F."/>
            <person name="Delcher A.L."/>
            <person name="Huson D.H."/>
            <person name="Kravitz S.A."/>
            <person name="Mouchard L."/>
            <person name="Reinert K."/>
            <person name="Remington K.A."/>
            <person name="Clark A.G."/>
            <person name="Waterman M.S."/>
            <person name="Eichler E.E."/>
            <person name="Adams M.D."/>
            <person name="Hunkapiller M.W."/>
            <person name="Myers E.W."/>
            <person name="Venter J.C."/>
        </authorList>
    </citation>
    <scope>NUCLEOTIDE SEQUENCE [LARGE SCALE GENOMIC DNA]</scope>
</reference>
<reference key="3">
    <citation type="journal article" date="2004" name="Genome Res.">
        <title>The status, quality, and expansion of the NIH full-length cDNA project: the Mammalian Gene Collection (MGC).</title>
        <authorList>
            <consortium name="The MGC Project Team"/>
        </authorList>
    </citation>
    <scope>NUCLEOTIDE SEQUENCE [LARGE SCALE MRNA]</scope>
</reference>
<protein>
    <recommendedName>
        <fullName>Putative uncharacterized protein encoded by LINC00474</fullName>
    </recommendedName>
    <alternativeName>
        <fullName>Protein EST-YD1</fullName>
    </alternativeName>
</protein>
<keyword id="KW-1185">Reference proteome</keyword>
<name>CI027_HUMAN</name>
<sequence length="69" mass="7854">MLCVSGFTSNLYSSKKDDKMKEISRTSNWGSSFSEKSGCMQTHPSMNLDCRDVTYVMNLLLIAHHHLLQ</sequence>
<proteinExistence type="uncertain"/>
<gene>
    <name type="primary">LINC00474</name>
    <name type="synonym">C9orf27</name>
</gene>
<comment type="caution">
    <text evidence="1">Product of a dubious CDS prediction. May be a non-coding RNA.</text>
</comment>
<comment type="sequence caution" evidence="1">
    <conflict type="frameshift">
        <sequence resource="EMBL-CDS" id="BAA96243"/>
    </conflict>
</comment>